<name>ASI1B_DANRE</name>
<feature type="chain" id="PRO_0000181296" description="Acid-sensing ion channel 1B">
    <location>
        <begin position="1"/>
        <end position="557"/>
    </location>
</feature>
<feature type="topological domain" description="Cytoplasmic" evidence="1">
    <location>
        <begin position="1"/>
        <end position="98"/>
    </location>
</feature>
<feature type="transmembrane region" description="Helical" evidence="1">
    <location>
        <begin position="99"/>
        <end position="115"/>
    </location>
</feature>
<feature type="topological domain" description="Extracellular" evidence="1">
    <location>
        <begin position="116"/>
        <end position="460"/>
    </location>
</feature>
<feature type="transmembrane region" description="Discontinuously helical" evidence="1">
    <location>
        <begin position="461"/>
        <end position="491"/>
    </location>
</feature>
<feature type="topological domain" description="Cytoplasmic" evidence="1">
    <location>
        <begin position="492"/>
        <end position="557"/>
    </location>
</feature>
<feature type="region of interest" description="Disordered" evidence="5">
    <location>
        <begin position="36"/>
        <end position="57"/>
    </location>
</feature>
<feature type="short sequence motif" description="GAS motif; ion selectivity filter" evidence="2">
    <location>
        <begin position="477"/>
        <end position="479"/>
    </location>
</feature>
<feature type="compositionally biased region" description="Basic and acidic residues" evidence="5">
    <location>
        <begin position="36"/>
        <end position="45"/>
    </location>
</feature>
<feature type="compositionally biased region" description="Acidic residues" evidence="5">
    <location>
        <begin position="46"/>
        <end position="57"/>
    </location>
</feature>
<feature type="site" description="Involved in channel desensitization; the process by which the channel becomes unresponsive to proton stimulation" evidence="2">
    <location>
        <position position="128"/>
    </location>
</feature>
<feature type="site" description="Involved in proton-dependent gating" evidence="1">
    <location>
        <position position="390"/>
    </location>
</feature>
<feature type="glycosylation site" description="N-linked (GlcNAc...) asparagine" evidence="4">
    <location>
        <position position="133"/>
    </location>
</feature>
<feature type="glycosylation site" description="N-linked (GlcNAc...) asparagine" evidence="4">
    <location>
        <position position="194"/>
    </location>
</feature>
<feature type="glycosylation site" description="N-linked (GlcNAc...) asparagine" evidence="4">
    <location>
        <position position="401"/>
    </location>
</feature>
<feature type="glycosylation site" description="N-linked (GlcNAc...) asparagine" evidence="4">
    <location>
        <position position="428"/>
    </location>
</feature>
<feature type="disulfide bond" evidence="2">
    <location>
        <begin position="142"/>
        <end position="229"/>
    </location>
</feature>
<feature type="disulfide bond" evidence="2">
    <location>
        <begin position="207"/>
        <end position="214"/>
    </location>
</feature>
<feature type="disulfide bond" evidence="2">
    <location>
        <begin position="325"/>
        <end position="400"/>
    </location>
</feature>
<feature type="disulfide bond" evidence="2">
    <location>
        <begin position="343"/>
        <end position="396"/>
    </location>
</feature>
<feature type="disulfide bond" evidence="2">
    <location>
        <begin position="347"/>
        <end position="394"/>
    </location>
</feature>
<feature type="disulfide bond" evidence="2">
    <location>
        <begin position="356"/>
        <end position="378"/>
    </location>
</feature>
<feature type="disulfide bond" evidence="2">
    <location>
        <begin position="358"/>
        <end position="370"/>
    </location>
</feature>
<proteinExistence type="evidence at transcript level"/>
<keyword id="KW-1003">Cell membrane</keyword>
<keyword id="KW-0966">Cell projection</keyword>
<keyword id="KW-1015">Disulfide bond</keyword>
<keyword id="KW-0325">Glycoprotein</keyword>
<keyword id="KW-0407">Ion channel</keyword>
<keyword id="KW-0406">Ion transport</keyword>
<keyword id="KW-0472">Membrane</keyword>
<keyword id="KW-0628">Postsynaptic cell membrane</keyword>
<keyword id="KW-1185">Reference proteome</keyword>
<keyword id="KW-0915">Sodium</keyword>
<keyword id="KW-0894">Sodium channel</keyword>
<keyword id="KW-0739">Sodium transport</keyword>
<keyword id="KW-0770">Synapse</keyword>
<keyword id="KW-0812">Transmembrane</keyword>
<keyword id="KW-1133">Transmembrane helix</keyword>
<keyword id="KW-0813">Transport</keyword>
<protein>
    <recommendedName>
        <fullName evidence="9">Acid-sensing ion channel 1B</fullName>
        <shortName evidence="9">ASIC1-B</shortName>
    </recommendedName>
    <alternativeName>
        <fullName>Acid-sensing ion channel 1.1-B</fullName>
    </alternativeName>
    <alternativeName>
        <fullName>Amiloride-sensitive cation channel 2-A, neuronal-B</fullName>
    </alternativeName>
    <alternativeName>
        <fullName evidence="7">ZASIC1.1</fullName>
    </alternativeName>
</protein>
<organism>
    <name type="scientific">Danio rerio</name>
    <name type="common">Zebrafish</name>
    <name type="synonym">Brachydanio rerio</name>
    <dbReference type="NCBI Taxonomy" id="7955"/>
    <lineage>
        <taxon>Eukaryota</taxon>
        <taxon>Metazoa</taxon>
        <taxon>Chordata</taxon>
        <taxon>Craniata</taxon>
        <taxon>Vertebrata</taxon>
        <taxon>Euteleostomi</taxon>
        <taxon>Actinopterygii</taxon>
        <taxon>Neopterygii</taxon>
        <taxon>Teleostei</taxon>
        <taxon>Ostariophysi</taxon>
        <taxon>Cypriniformes</taxon>
        <taxon>Danionidae</taxon>
        <taxon>Danioninae</taxon>
        <taxon>Danio</taxon>
    </lineage>
</organism>
<reference key="1">
    <citation type="journal article" date="2004" name="J. Biol. Chem.">
        <title>A family of acid-sensing ion channels (ASICs) from the zebrafish: widespread expression in the central nervous system suggests a conserved role in neuronal communication.</title>
        <authorList>
            <person name="Paukert M."/>
            <person name="Sidi S."/>
            <person name="Russell C."/>
            <person name="Siba M."/>
            <person name="Wilson S.W."/>
            <person name="Nicolson T."/>
            <person name="Gruender S."/>
        </authorList>
    </citation>
    <scope>NUCLEOTIDE SEQUENCE [MRNA]</scope>
    <scope>FUNCTION</scope>
    <scope>TRANSPORTER ACTIVITY</scope>
    <scope>ACTIVITY REGULATION</scope>
    <scope>SUBCELLULAR LOCATION</scope>
    <scope>TISSUE SPECIFICITY</scope>
    <scope>DEVELOPMENTAL STAGE</scope>
</reference>
<evidence type="ECO:0000250" key="1">
    <source>
        <dbReference type="UniProtKB" id="P78348"/>
    </source>
</evidence>
<evidence type="ECO:0000250" key="2">
    <source>
        <dbReference type="UniProtKB" id="Q1XA76"/>
    </source>
</evidence>
<evidence type="ECO:0000250" key="3">
    <source>
        <dbReference type="UniProtKB" id="Q6NXK8"/>
    </source>
</evidence>
<evidence type="ECO:0000255" key="4"/>
<evidence type="ECO:0000256" key="5">
    <source>
        <dbReference type="SAM" id="MobiDB-lite"/>
    </source>
</evidence>
<evidence type="ECO:0000269" key="6">
    <source>
    </source>
</evidence>
<evidence type="ECO:0000303" key="7">
    <source>
    </source>
</evidence>
<evidence type="ECO:0000305" key="8"/>
<evidence type="ECO:0000305" key="9">
    <source>
    </source>
</evidence>
<gene>
    <name type="primary">asic1b</name>
    <name type="synonym">accn2a</name>
</gene>
<accession>Q708S8</accession>
<dbReference type="EMBL" id="AJ609615">
    <property type="protein sequence ID" value="CAE81918.1"/>
    <property type="molecule type" value="mRNA"/>
</dbReference>
<dbReference type="RefSeq" id="NP_999956.1">
    <property type="nucleotide sequence ID" value="NM_214791.1"/>
</dbReference>
<dbReference type="SMR" id="Q708S8"/>
<dbReference type="FunCoup" id="Q708S8">
    <property type="interactions" value="619"/>
</dbReference>
<dbReference type="GlyCosmos" id="Q708S8">
    <property type="glycosylation" value="4 sites, No reported glycans"/>
</dbReference>
<dbReference type="PaxDb" id="7955-ENSDARP00000116909"/>
<dbReference type="Ensembl" id="ENSDART00000165549">
    <property type="protein sequence ID" value="ENSDARP00000133845"/>
    <property type="gene ID" value="ENSDARG00000101866"/>
</dbReference>
<dbReference type="GeneID" id="407672"/>
<dbReference type="KEGG" id="dre:407672"/>
<dbReference type="AGR" id="ZFIN:ZDB-GENE-040513-1"/>
<dbReference type="CTD" id="407672"/>
<dbReference type="ZFIN" id="ZDB-GENE-040513-1">
    <property type="gene designation" value="asic1b"/>
</dbReference>
<dbReference type="eggNOG" id="KOG4294">
    <property type="taxonomic scope" value="Eukaryota"/>
</dbReference>
<dbReference type="InParanoid" id="Q708S8"/>
<dbReference type="OMA" id="NYSISAC"/>
<dbReference type="OrthoDB" id="6021021at2759"/>
<dbReference type="PhylomeDB" id="Q708S8"/>
<dbReference type="TreeFam" id="TF330663"/>
<dbReference type="Reactome" id="R-DRE-2672351">
    <property type="pathway name" value="Stimuli-sensing channels"/>
</dbReference>
<dbReference type="PRO" id="PR:Q708S8"/>
<dbReference type="Proteomes" id="UP000000437">
    <property type="component" value="Chromosome 22"/>
</dbReference>
<dbReference type="Bgee" id="ENSDARG00000101866">
    <property type="expression patterns" value="Expressed in spleen and 13 other cell types or tissues"/>
</dbReference>
<dbReference type="ExpressionAtlas" id="Q708S8">
    <property type="expression patterns" value="baseline and differential"/>
</dbReference>
<dbReference type="GO" id="GO:0030425">
    <property type="term" value="C:dendrite"/>
    <property type="evidence" value="ECO:0007669"/>
    <property type="project" value="UniProtKB-SubCell"/>
</dbReference>
<dbReference type="GO" id="GO:0005886">
    <property type="term" value="C:plasma membrane"/>
    <property type="evidence" value="ECO:0000314"/>
    <property type="project" value="ZFIN"/>
</dbReference>
<dbReference type="GO" id="GO:0045211">
    <property type="term" value="C:postsynaptic membrane"/>
    <property type="evidence" value="ECO:0007669"/>
    <property type="project" value="UniProtKB-SubCell"/>
</dbReference>
<dbReference type="GO" id="GO:0015280">
    <property type="term" value="F:ligand-gated sodium channel activity"/>
    <property type="evidence" value="ECO:0000314"/>
    <property type="project" value="ZFIN"/>
</dbReference>
<dbReference type="GO" id="GO:0160128">
    <property type="term" value="F:pH-gated monoatomic ion channel activity"/>
    <property type="evidence" value="ECO:0000250"/>
    <property type="project" value="UniProtKB"/>
</dbReference>
<dbReference type="GO" id="GO:0071467">
    <property type="term" value="P:cellular response to pH"/>
    <property type="evidence" value="ECO:0000250"/>
    <property type="project" value="UniProtKB"/>
</dbReference>
<dbReference type="GO" id="GO:0035725">
    <property type="term" value="P:sodium ion transmembrane transport"/>
    <property type="evidence" value="ECO:0000318"/>
    <property type="project" value="GO_Central"/>
</dbReference>
<dbReference type="FunFam" id="2.60.470.10:FF:000001">
    <property type="entry name" value="Acid-sensing (proton-gated) ion channel family member 4a"/>
    <property type="match status" value="1"/>
</dbReference>
<dbReference type="FunFam" id="1.10.287.770:FF:000001">
    <property type="entry name" value="Acid-sensing ion channel subunit 1"/>
    <property type="match status" value="1"/>
</dbReference>
<dbReference type="Gene3D" id="2.60.470.10">
    <property type="entry name" value="Acid-sensing ion channels like domains"/>
    <property type="match status" value="1"/>
</dbReference>
<dbReference type="Gene3D" id="1.10.287.770">
    <property type="entry name" value="YojJ-like"/>
    <property type="match status" value="1"/>
</dbReference>
<dbReference type="InterPro" id="IPR001873">
    <property type="entry name" value="ENaC"/>
</dbReference>
<dbReference type="InterPro" id="IPR004724">
    <property type="entry name" value="ENaC_chordates"/>
</dbReference>
<dbReference type="InterPro" id="IPR020903">
    <property type="entry name" value="ENaC_CS"/>
</dbReference>
<dbReference type="NCBIfam" id="TIGR00859">
    <property type="entry name" value="ENaC"/>
    <property type="match status" value="1"/>
</dbReference>
<dbReference type="PANTHER" id="PTHR11690:SF297">
    <property type="entry name" value="ACID-SENSING ION CHANNEL 1B"/>
    <property type="match status" value="1"/>
</dbReference>
<dbReference type="PANTHER" id="PTHR11690">
    <property type="entry name" value="AMILORIDE-SENSITIVE SODIUM CHANNEL-RELATED"/>
    <property type="match status" value="1"/>
</dbReference>
<dbReference type="Pfam" id="PF00858">
    <property type="entry name" value="ASC"/>
    <property type="match status" value="1"/>
</dbReference>
<dbReference type="PRINTS" id="PR01078">
    <property type="entry name" value="AMINACHANNEL"/>
</dbReference>
<dbReference type="PROSITE" id="PS01206">
    <property type="entry name" value="ASC"/>
    <property type="match status" value="1"/>
</dbReference>
<comment type="function">
    <text evidence="1 6">Forms voltage-independent, pH-gated trimeric sodium channels that act as postsynaptic excitatory receptors in the nervous system, playing a crucial role in regulating synaptic plasticity, learning, and memory (PubMed:14970195). Upon extracellular pH drop this channel elicits transient, fast activating, and completely desensitizing inward currents (PubMed:14970195). Displays high selectivity for sodium ions but can also permit the permeation of other cations (By similarity).</text>
</comment>
<comment type="catalytic activity">
    <reaction evidence="6">
        <text>Na(+)(in) = Na(+)(out)</text>
        <dbReference type="Rhea" id="RHEA:34963"/>
        <dbReference type="ChEBI" id="CHEBI:29101"/>
    </reaction>
</comment>
<comment type="catalytic activity">
    <reaction evidence="1">
        <text>K(+)(in) = K(+)(out)</text>
        <dbReference type="Rhea" id="RHEA:29463"/>
        <dbReference type="ChEBI" id="CHEBI:29103"/>
    </reaction>
</comment>
<comment type="catalytic activity">
    <reaction evidence="1">
        <text>Li(+)(in) = Li(+)(out)</text>
        <dbReference type="Rhea" id="RHEA:78551"/>
        <dbReference type="ChEBI" id="CHEBI:49713"/>
    </reaction>
</comment>
<comment type="catalytic activity">
    <reaction evidence="1">
        <text>Ca(2+)(in) = Ca(2+)(out)</text>
        <dbReference type="Rhea" id="RHEA:29671"/>
        <dbReference type="ChEBI" id="CHEBI:29108"/>
    </reaction>
</comment>
<comment type="activity regulation">
    <text evidence="6">Inhibited by the diuretic drug amiloride.</text>
</comment>
<comment type="subunit">
    <text evidence="9">Homotrimer (Probable). Heterotrimer; with other ASIC proteins producing channel with different properties (Probable).</text>
</comment>
<comment type="subcellular location">
    <subcellularLocation>
        <location evidence="6">Cell membrane</location>
        <topology evidence="2">Multi-pass membrane protein</topology>
    </subcellularLocation>
    <subcellularLocation>
        <location evidence="9">Postsynaptic cell membrane</location>
    </subcellularLocation>
    <subcellularLocation>
        <location evidence="3">Cell projection</location>
        <location evidence="3">Dendrite</location>
    </subcellularLocation>
</comment>
<comment type="tissue specificity">
    <text evidence="6">Expressed in central nervous system.</text>
</comment>
<comment type="developmental stage">
    <text evidence="6">Expression starts 30 hours post-fertilization (hpf) and is restricted to the anterior and posterior lateral line ganglia and the otic sensory neurons. At 48 hpf expression also becomes evident in the trigeminal ganglia. At 96 hpf expressed throughout most of the central nervous system. Excluded from the dorsal forebrain except for the habenula nuclei.</text>
</comment>
<comment type="domain">
    <text evidence="2">The second transmembrane domain (TM2) is a discontinuous alpha-helix disrupted by the GAS motif, which forms the selectivity filter by adopting an extended, belt-like conformation aligned approximately parallel to the membrane plane. This peptide belt encircles the waist of the channel and divides TM2 into two discontinuous helical segments. The distal helical segment of TM2 interacts with the cytoplasmic portion of the first transmembrane domain (TM1) from a neighboring subunit, contributing to the structural and functional integrity of the channel.</text>
</comment>
<comment type="similarity">
    <text evidence="8">Belongs to the amiloride-sensitive sodium channel (TC 1.A.6) family. ASIC1 subfamily.</text>
</comment>
<sequence>MVRITCTISFSTDDEPVGRSRQGSFDDHYKRVVWSKDGEQGKYQEEGDDPDAYDGPEDEEAPDISLATFFGGCSLHGANHVFVEDKKFSIRQGLWALVFLLAISMFLLQVVDRVIYYLQYDYVTLLDERNAKNMTFPAITLCNYNTFRRSQLSYSDLLFMGPLLGYEDNMAPGIPLAPEPDRQGSRFSLAEFFNRTRHRMDDMLLECNFAGKECGAEHWREIFTRYGKCYTFNSGQDGRPLLITTKGGMGNGLEIMLDIQQDEYLPVWGETDETTFEAGIKVQIHTQDEPPFIDQLGFGVAPGFQTFVSCQEQRLTYLPPPWGDCKATPIDSDFFNTYSITACRIDCETRYLVENCNCRMVHMPGDAPYCTPEQYKECADPALDFLVERDNDYCVCETPCNMTRYGKELSFVRIPSKASAKYLAKKYNKTEQYISDNIMVLDIFFEALNYETIEQKKAYELAGLLGDIGGQMGLFIGASILTILELFDYLYEVIKFKLCRCAKKKHQRSNNNERGAVLSLDDVKRHAPCDNLRTPSTYPANMLPHHPGQGNFEDFTC</sequence>